<accession>Q2IJ53</accession>
<organism>
    <name type="scientific">Anaeromyxobacter dehalogenans (strain 2CP-C)</name>
    <dbReference type="NCBI Taxonomy" id="290397"/>
    <lineage>
        <taxon>Bacteria</taxon>
        <taxon>Pseudomonadati</taxon>
        <taxon>Myxococcota</taxon>
        <taxon>Myxococcia</taxon>
        <taxon>Myxococcales</taxon>
        <taxon>Cystobacterineae</taxon>
        <taxon>Anaeromyxobacteraceae</taxon>
        <taxon>Anaeromyxobacter</taxon>
    </lineage>
</organism>
<proteinExistence type="inferred from homology"/>
<comment type="function">
    <text evidence="1">An accessory protein needed during the final step in the assembly of 30S ribosomal subunit, possibly for assembly of the head region. Essential for efficient processing of 16S rRNA. May be needed both before and after RbfA during the maturation of 16S rRNA. It has affinity for free ribosomal 30S subunits but not for 70S ribosomes.</text>
</comment>
<comment type="subunit">
    <text evidence="1">Binds ribosomal protein uS19.</text>
</comment>
<comment type="subcellular location">
    <subcellularLocation>
        <location evidence="1">Cytoplasm</location>
    </subcellularLocation>
</comment>
<comment type="domain">
    <text evidence="1">The PRC barrel domain binds ribosomal protein uS19.</text>
</comment>
<comment type="similarity">
    <text evidence="1">Belongs to the RimM family.</text>
</comment>
<keyword id="KW-0143">Chaperone</keyword>
<keyword id="KW-0963">Cytoplasm</keyword>
<keyword id="KW-1185">Reference proteome</keyword>
<keyword id="KW-0690">Ribosome biogenesis</keyword>
<keyword id="KW-0698">rRNA processing</keyword>
<gene>
    <name evidence="1" type="primary">rimM</name>
    <name type="ordered locus">Adeh_1914</name>
</gene>
<sequence>MALVRIGKVVRALGLKGHLGVAGSEGALGTLERVVLRHGAAEVERKVLEARPQGRLWAVRIDGVADRTGAEALVGAEVLAPREELGEAGEGRHYWGDLEGLPVVTVQGEALGTVTGLMETGAVDVLVVQGARGELLVPLAPYVEVDRAAGRVVVDPPEGLLEP</sequence>
<reference key="1">
    <citation type="submission" date="2006-01" db="EMBL/GenBank/DDBJ databases">
        <title>Complete sequence of Anaeromyxobacter dehalogenans 2CP-C.</title>
        <authorList>
            <person name="Copeland A."/>
            <person name="Lucas S."/>
            <person name="Lapidus A."/>
            <person name="Barry K."/>
            <person name="Detter J.C."/>
            <person name="Glavina T."/>
            <person name="Hammon N."/>
            <person name="Israni S."/>
            <person name="Pitluck S."/>
            <person name="Brettin T."/>
            <person name="Bruce D."/>
            <person name="Han C."/>
            <person name="Tapia R."/>
            <person name="Gilna P."/>
            <person name="Kiss H."/>
            <person name="Schmutz J."/>
            <person name="Larimer F."/>
            <person name="Land M."/>
            <person name="Kyrpides N."/>
            <person name="Anderson I."/>
            <person name="Sanford R.A."/>
            <person name="Ritalahti K.M."/>
            <person name="Thomas H.S."/>
            <person name="Kirby J.R."/>
            <person name="Zhulin I.B."/>
            <person name="Loeffler F.E."/>
            <person name="Richardson P."/>
        </authorList>
    </citation>
    <scope>NUCLEOTIDE SEQUENCE [LARGE SCALE GENOMIC DNA]</scope>
    <source>
        <strain>2CP-C</strain>
    </source>
</reference>
<feature type="chain" id="PRO_0000244109" description="Ribosome maturation factor RimM">
    <location>
        <begin position="1"/>
        <end position="163"/>
    </location>
</feature>
<feature type="domain" description="PRC barrel" evidence="1">
    <location>
        <begin position="90"/>
        <end position="161"/>
    </location>
</feature>
<dbReference type="EMBL" id="CP000251">
    <property type="protein sequence ID" value="ABC81685.1"/>
    <property type="molecule type" value="Genomic_DNA"/>
</dbReference>
<dbReference type="RefSeq" id="WP_011420968.1">
    <property type="nucleotide sequence ID" value="NC_007760.1"/>
</dbReference>
<dbReference type="SMR" id="Q2IJ53"/>
<dbReference type="STRING" id="290397.Adeh_1914"/>
<dbReference type="KEGG" id="ade:Adeh_1914"/>
<dbReference type="eggNOG" id="COG0806">
    <property type="taxonomic scope" value="Bacteria"/>
</dbReference>
<dbReference type="HOGENOM" id="CLU_077636_1_0_7"/>
<dbReference type="OrthoDB" id="9783509at2"/>
<dbReference type="Proteomes" id="UP000001935">
    <property type="component" value="Chromosome"/>
</dbReference>
<dbReference type="GO" id="GO:0005737">
    <property type="term" value="C:cytoplasm"/>
    <property type="evidence" value="ECO:0007669"/>
    <property type="project" value="UniProtKB-SubCell"/>
</dbReference>
<dbReference type="GO" id="GO:0005840">
    <property type="term" value="C:ribosome"/>
    <property type="evidence" value="ECO:0007669"/>
    <property type="project" value="InterPro"/>
</dbReference>
<dbReference type="GO" id="GO:0043022">
    <property type="term" value="F:ribosome binding"/>
    <property type="evidence" value="ECO:0007669"/>
    <property type="project" value="InterPro"/>
</dbReference>
<dbReference type="GO" id="GO:0042274">
    <property type="term" value="P:ribosomal small subunit biogenesis"/>
    <property type="evidence" value="ECO:0007669"/>
    <property type="project" value="UniProtKB-UniRule"/>
</dbReference>
<dbReference type="GO" id="GO:0006364">
    <property type="term" value="P:rRNA processing"/>
    <property type="evidence" value="ECO:0007669"/>
    <property type="project" value="UniProtKB-UniRule"/>
</dbReference>
<dbReference type="Gene3D" id="2.30.30.240">
    <property type="entry name" value="PRC-barrel domain"/>
    <property type="match status" value="1"/>
</dbReference>
<dbReference type="Gene3D" id="2.40.30.60">
    <property type="entry name" value="RimM"/>
    <property type="match status" value="1"/>
</dbReference>
<dbReference type="HAMAP" id="MF_00014">
    <property type="entry name" value="Ribosome_mat_RimM"/>
    <property type="match status" value="1"/>
</dbReference>
<dbReference type="InterPro" id="IPR011033">
    <property type="entry name" value="PRC_barrel-like_sf"/>
</dbReference>
<dbReference type="InterPro" id="IPR056792">
    <property type="entry name" value="PRC_RimM"/>
</dbReference>
<dbReference type="InterPro" id="IPR011961">
    <property type="entry name" value="RimM"/>
</dbReference>
<dbReference type="InterPro" id="IPR002676">
    <property type="entry name" value="RimM_N"/>
</dbReference>
<dbReference type="InterPro" id="IPR036976">
    <property type="entry name" value="RimM_N_sf"/>
</dbReference>
<dbReference type="NCBIfam" id="TIGR02273">
    <property type="entry name" value="16S_RimM"/>
    <property type="match status" value="1"/>
</dbReference>
<dbReference type="PANTHER" id="PTHR33692">
    <property type="entry name" value="RIBOSOME MATURATION FACTOR RIMM"/>
    <property type="match status" value="1"/>
</dbReference>
<dbReference type="PANTHER" id="PTHR33692:SF1">
    <property type="entry name" value="RIBOSOME MATURATION FACTOR RIMM"/>
    <property type="match status" value="1"/>
</dbReference>
<dbReference type="Pfam" id="PF24986">
    <property type="entry name" value="PRC_RimM"/>
    <property type="match status" value="1"/>
</dbReference>
<dbReference type="Pfam" id="PF01782">
    <property type="entry name" value="RimM"/>
    <property type="match status" value="1"/>
</dbReference>
<dbReference type="SUPFAM" id="SSF50346">
    <property type="entry name" value="PRC-barrel domain"/>
    <property type="match status" value="1"/>
</dbReference>
<evidence type="ECO:0000255" key="1">
    <source>
        <dbReference type="HAMAP-Rule" id="MF_00014"/>
    </source>
</evidence>
<name>RIMM_ANADE</name>
<protein>
    <recommendedName>
        <fullName evidence="1">Ribosome maturation factor RimM</fullName>
    </recommendedName>
</protein>